<keyword id="KW-0028">Amino-acid biosynthesis</keyword>
<keyword id="KW-0067">ATP-binding</keyword>
<keyword id="KW-0963">Cytoplasm</keyword>
<keyword id="KW-0328">Glycosyltransferase</keyword>
<keyword id="KW-0368">Histidine biosynthesis</keyword>
<keyword id="KW-0547">Nucleotide-binding</keyword>
<keyword id="KW-0808">Transferase</keyword>
<organism>
    <name type="scientific">Petrotoga mobilis (strain DSM 10674 / SJ95)</name>
    <dbReference type="NCBI Taxonomy" id="403833"/>
    <lineage>
        <taxon>Bacteria</taxon>
        <taxon>Thermotogati</taxon>
        <taxon>Thermotogota</taxon>
        <taxon>Thermotogae</taxon>
        <taxon>Petrotogales</taxon>
        <taxon>Petrotogaceae</taxon>
        <taxon>Petrotoga</taxon>
    </lineage>
</organism>
<accession>A9BJZ4</accession>
<feature type="chain" id="PRO_1000135287" description="ATP phosphoribosyltransferase">
    <location>
        <begin position="1"/>
        <end position="210"/>
    </location>
</feature>
<reference key="1">
    <citation type="submission" date="2007-11" db="EMBL/GenBank/DDBJ databases">
        <title>Complete sequence of Petroga mobilis SJ95.</title>
        <authorList>
            <consortium name="US DOE Joint Genome Institute"/>
            <person name="Copeland A."/>
            <person name="Lucas S."/>
            <person name="Lapidus A."/>
            <person name="Barry K."/>
            <person name="Glavina del Rio T."/>
            <person name="Dalin E."/>
            <person name="Tice H."/>
            <person name="Pitluck S."/>
            <person name="Meincke L."/>
            <person name="Brettin T."/>
            <person name="Bruce D."/>
            <person name="Detter J.C."/>
            <person name="Han C."/>
            <person name="Kuske C.R."/>
            <person name="Schmutz J."/>
            <person name="Larimer F."/>
            <person name="Land M."/>
            <person name="Hauser L."/>
            <person name="Kyrpides N."/>
            <person name="Mikhailova N."/>
            <person name="Noll K."/>
            <person name="Richardson P."/>
        </authorList>
    </citation>
    <scope>NUCLEOTIDE SEQUENCE [LARGE SCALE GENOMIC DNA]</scope>
    <source>
        <strain>DSM 10674 / SJ95</strain>
    </source>
</reference>
<name>HIS1_PETMO</name>
<dbReference type="EC" id="2.4.2.17" evidence="1"/>
<dbReference type="EMBL" id="CP000879">
    <property type="protein sequence ID" value="ABX31737.1"/>
    <property type="molecule type" value="Genomic_DNA"/>
</dbReference>
<dbReference type="SMR" id="A9BJZ4"/>
<dbReference type="STRING" id="403833.Pmob_1016"/>
<dbReference type="KEGG" id="pmo:Pmob_1016"/>
<dbReference type="eggNOG" id="COG0040">
    <property type="taxonomic scope" value="Bacteria"/>
</dbReference>
<dbReference type="HOGENOM" id="CLU_038115_2_0_0"/>
<dbReference type="OrthoDB" id="9801867at2"/>
<dbReference type="UniPathway" id="UPA00031">
    <property type="reaction ID" value="UER00006"/>
</dbReference>
<dbReference type="Proteomes" id="UP000000789">
    <property type="component" value="Chromosome"/>
</dbReference>
<dbReference type="GO" id="GO:0005737">
    <property type="term" value="C:cytoplasm"/>
    <property type="evidence" value="ECO:0007669"/>
    <property type="project" value="UniProtKB-SubCell"/>
</dbReference>
<dbReference type="GO" id="GO:0005524">
    <property type="term" value="F:ATP binding"/>
    <property type="evidence" value="ECO:0007669"/>
    <property type="project" value="UniProtKB-KW"/>
</dbReference>
<dbReference type="GO" id="GO:0003879">
    <property type="term" value="F:ATP phosphoribosyltransferase activity"/>
    <property type="evidence" value="ECO:0007669"/>
    <property type="project" value="UniProtKB-UniRule"/>
</dbReference>
<dbReference type="GO" id="GO:0000105">
    <property type="term" value="P:L-histidine biosynthetic process"/>
    <property type="evidence" value="ECO:0007669"/>
    <property type="project" value="UniProtKB-UniRule"/>
</dbReference>
<dbReference type="CDD" id="cd13595">
    <property type="entry name" value="PBP2_HisGs"/>
    <property type="match status" value="1"/>
</dbReference>
<dbReference type="FunFam" id="3.40.190.10:FF:000008">
    <property type="entry name" value="ATP phosphoribosyltransferase"/>
    <property type="match status" value="1"/>
</dbReference>
<dbReference type="Gene3D" id="3.40.190.10">
    <property type="entry name" value="Periplasmic binding protein-like II"/>
    <property type="match status" value="2"/>
</dbReference>
<dbReference type="HAMAP" id="MF_01018">
    <property type="entry name" value="HisG_Short"/>
    <property type="match status" value="1"/>
</dbReference>
<dbReference type="InterPro" id="IPR013820">
    <property type="entry name" value="ATP_PRibTrfase_cat"/>
</dbReference>
<dbReference type="InterPro" id="IPR018198">
    <property type="entry name" value="ATP_PRibTrfase_CS"/>
</dbReference>
<dbReference type="InterPro" id="IPR001348">
    <property type="entry name" value="ATP_PRibTrfase_HisG"/>
</dbReference>
<dbReference type="InterPro" id="IPR024893">
    <property type="entry name" value="ATP_PRibTrfase_HisG_short"/>
</dbReference>
<dbReference type="NCBIfam" id="TIGR00070">
    <property type="entry name" value="hisG"/>
    <property type="match status" value="1"/>
</dbReference>
<dbReference type="PANTHER" id="PTHR21403:SF10">
    <property type="entry name" value="ATP PHOSPHORIBOSYLTRANSFERASE"/>
    <property type="match status" value="1"/>
</dbReference>
<dbReference type="PANTHER" id="PTHR21403">
    <property type="entry name" value="ATP PHOSPHORIBOSYLTRANSFERASE ATP-PRTASE"/>
    <property type="match status" value="1"/>
</dbReference>
<dbReference type="Pfam" id="PF01634">
    <property type="entry name" value="HisG"/>
    <property type="match status" value="1"/>
</dbReference>
<dbReference type="SUPFAM" id="SSF53850">
    <property type="entry name" value="Periplasmic binding protein-like II"/>
    <property type="match status" value="1"/>
</dbReference>
<dbReference type="PROSITE" id="PS01316">
    <property type="entry name" value="ATP_P_PHORIBOSYLTR"/>
    <property type="match status" value="1"/>
</dbReference>
<protein>
    <recommendedName>
        <fullName evidence="1">ATP phosphoribosyltransferase</fullName>
        <shortName evidence="1">ATP-PRT</shortName>
        <shortName evidence="1">ATP-PRTase</shortName>
        <ecNumber evidence="1">2.4.2.17</ecNumber>
    </recommendedName>
</protein>
<sequence length="210" mass="23458">MTTISAALPSGRLLEDSKAFLKKIGINVKEPAKRELISYENGYAFYFPRAFDVPVYVENGVDIGICGSDVVLERNNEVYIPLELPFGKCRMSIILPENREISFQNMEGYKIATKYPEITKNFFSEKGLKVKILKLNGAVELAAKTGIADAIVDIVDTGNTIKANNLKEAYKIMDISAVLLVNRITQKTKFDFINDLINKAKNYKNGVKGH</sequence>
<gene>
    <name evidence="1" type="primary">hisG</name>
    <name type="ordered locus">Pmob_1016</name>
</gene>
<comment type="function">
    <text evidence="1">Catalyzes the condensation of ATP and 5-phosphoribose 1-diphosphate to form N'-(5'-phosphoribosyl)-ATP (PR-ATP). Has a crucial role in the pathway because the rate of histidine biosynthesis seems to be controlled primarily by regulation of HisG enzymatic activity.</text>
</comment>
<comment type="catalytic activity">
    <reaction evidence="1">
        <text>1-(5-phospho-beta-D-ribosyl)-ATP + diphosphate = 5-phospho-alpha-D-ribose 1-diphosphate + ATP</text>
        <dbReference type="Rhea" id="RHEA:18473"/>
        <dbReference type="ChEBI" id="CHEBI:30616"/>
        <dbReference type="ChEBI" id="CHEBI:33019"/>
        <dbReference type="ChEBI" id="CHEBI:58017"/>
        <dbReference type="ChEBI" id="CHEBI:73183"/>
        <dbReference type="EC" id="2.4.2.17"/>
    </reaction>
</comment>
<comment type="pathway">
    <text evidence="1">Amino-acid biosynthesis; L-histidine biosynthesis; L-histidine from 5-phospho-alpha-D-ribose 1-diphosphate: step 1/9.</text>
</comment>
<comment type="subunit">
    <text evidence="1">Heteromultimer composed of HisG and HisZ subunits.</text>
</comment>
<comment type="subcellular location">
    <subcellularLocation>
        <location evidence="1">Cytoplasm</location>
    </subcellularLocation>
</comment>
<comment type="domain">
    <text>Lacks the C-terminal regulatory region which is replaced by HisZ.</text>
</comment>
<comment type="similarity">
    <text evidence="1">Belongs to the ATP phosphoribosyltransferase family. Short subfamily.</text>
</comment>
<proteinExistence type="inferred from homology"/>
<evidence type="ECO:0000255" key="1">
    <source>
        <dbReference type="HAMAP-Rule" id="MF_01018"/>
    </source>
</evidence>